<sequence length="596" mass="66906">MPVCKNCHGTEFERDLSNANNDLVCKACGVVSEDNPIVSEVTFGETSAGAAVVQGSFIGAGQSHAAFGGSSALESREATLNNARRKLRAVSYALHIPEYITDAAFQWYKLALANNFVQGRRSQNVIASCLYVACRKEKTHHMLIDFSSRLQVSVYSIGATFLKMVKKLHITELPLADPSLFIQHFAEKLDLADKKIKVVKDAVKLAQRMSKDWMFEGRRPAGIAGACILLACRMNNLRRTHTEIVAVSHVAEETLQQRLNEFKNTKAAKLSVQKFRENDVEDGEARPPSFVKNRKKERKIKDSLDKEEMFQTSEEALNKNPILTQVLGEQELSSKEVLFYLKQFSERRARVVERIKATNGIDGENIYHEGSENETRKRKLSEVSIQNEHVEGEDKETEGTEEKVKKVKTKTSEEKKENESGHFQDAIDGYSLETDPYCPRNLHLLPTTDTYLSKVSDDPDNLEDVDDEELNAHLLNEEASKLKERIWIGLNADFLLEQESKRLKQEADIATGNTSVKKKRTRRRNNTRSDEPTKTVDAAAAIGLMSDLQDKSGLHAALKAAEESGDFTTADSVKNMLQKASFSKKINYDAIDGLFR</sequence>
<proteinExistence type="evidence at protein level"/>
<comment type="function">
    <text>General activator of RNA polymerase III transcription. Interacts with TBP. Binds to Pol III subunit C34 and to the TAU135 component of TFIIIC.</text>
</comment>
<comment type="subunit">
    <text>TFIIIB comprises the TATA-binding protein (TBP), the B-related factor (BRF) and the B' component (TFC5).</text>
</comment>
<comment type="interaction">
    <interactant intactId="EBI-19142">
        <id>P29056</id>
    </interactant>
    <interactant intactId="EBI-19129">
        <id>P13393</id>
        <label>SPT15</label>
    </interactant>
    <organismsDiffer>false</organismsDiffer>
    <experiments>3</experiments>
</comment>
<comment type="subcellular location">
    <subcellularLocation>
        <location>Nucleus</location>
    </subcellularLocation>
</comment>
<comment type="miscellaneous">
    <text evidence="3">Present with 4330 molecules/cell in log phase SD medium.</text>
</comment>
<comment type="similarity">
    <text evidence="4">Belongs to the TFIIB family.</text>
</comment>
<protein>
    <recommendedName>
        <fullName>Transcription factor IIIB 70 kDa subunit</fullName>
        <shortName>TFIIIB</shortName>
    </recommendedName>
    <alternativeName>
        <fullName>B-related factor 1</fullName>
        <shortName>BRF-1</shortName>
    </alternativeName>
</protein>
<organism>
    <name type="scientific">Saccharomyces cerevisiae (strain ATCC 204508 / S288c)</name>
    <name type="common">Baker's yeast</name>
    <dbReference type="NCBI Taxonomy" id="559292"/>
    <lineage>
        <taxon>Eukaryota</taxon>
        <taxon>Fungi</taxon>
        <taxon>Dikarya</taxon>
        <taxon>Ascomycota</taxon>
        <taxon>Saccharomycotina</taxon>
        <taxon>Saccharomycetes</taxon>
        <taxon>Saccharomycetales</taxon>
        <taxon>Saccharomycetaceae</taxon>
        <taxon>Saccharomyces</taxon>
    </lineage>
</organism>
<evidence type="ECO:0000255" key="1">
    <source>
        <dbReference type="PROSITE-ProRule" id="PRU00469"/>
    </source>
</evidence>
<evidence type="ECO:0000256" key="2">
    <source>
        <dbReference type="SAM" id="MobiDB-lite"/>
    </source>
</evidence>
<evidence type="ECO:0000269" key="3">
    <source>
    </source>
</evidence>
<evidence type="ECO:0000305" key="4"/>
<evidence type="ECO:0007744" key="5">
    <source>
    </source>
</evidence>
<evidence type="ECO:0007744" key="6">
    <source>
    </source>
</evidence>
<evidence type="ECO:0007829" key="7">
    <source>
        <dbReference type="PDB" id="1NGM"/>
    </source>
</evidence>
<keyword id="KW-0002">3D-structure</keyword>
<keyword id="KW-0010">Activator</keyword>
<keyword id="KW-0479">Metal-binding</keyword>
<keyword id="KW-0539">Nucleus</keyword>
<keyword id="KW-0597">Phosphoprotein</keyword>
<keyword id="KW-1185">Reference proteome</keyword>
<keyword id="KW-0677">Repeat</keyword>
<keyword id="KW-0804">Transcription</keyword>
<keyword id="KW-0805">Transcription regulation</keyword>
<keyword id="KW-0862">Zinc</keyword>
<keyword id="KW-0863">Zinc-finger</keyword>
<accession>P29056</accession>
<accession>D6VV26</accession>
<dbReference type="EMBL" id="M91073">
    <property type="protein sequence ID" value="AAB04945.1"/>
    <property type="molecule type" value="Genomic_DNA"/>
</dbReference>
<dbReference type="EMBL" id="L00630">
    <property type="protein sequence ID" value="AAA35148.1"/>
    <property type="molecule type" value="Genomic_DNA"/>
</dbReference>
<dbReference type="EMBL" id="Y07703">
    <property type="protein sequence ID" value="CAA68968.1"/>
    <property type="molecule type" value="Genomic_DNA"/>
</dbReference>
<dbReference type="EMBL" id="Z73031">
    <property type="protein sequence ID" value="CAA97275.1"/>
    <property type="molecule type" value="Genomic_DNA"/>
</dbReference>
<dbReference type="EMBL" id="BK006941">
    <property type="protein sequence ID" value="DAA08337.1"/>
    <property type="molecule type" value="Genomic_DNA"/>
</dbReference>
<dbReference type="PIR" id="A44072">
    <property type="entry name" value="A44072"/>
</dbReference>
<dbReference type="RefSeq" id="NP_011762.1">
    <property type="nucleotide sequence ID" value="NM_001181375.1"/>
</dbReference>
<dbReference type="PDB" id="1NGM">
    <property type="method" value="X-ray"/>
    <property type="resolution" value="2.95 A"/>
    <property type="chains" value="B/F/J/N=437-506"/>
</dbReference>
<dbReference type="PDB" id="6CNB">
    <property type="method" value="EM"/>
    <property type="resolution" value="4.10 A"/>
    <property type="chains" value="R=1-382, R=438-596"/>
</dbReference>
<dbReference type="PDB" id="6CNC">
    <property type="method" value="EM"/>
    <property type="resolution" value="4.10 A"/>
    <property type="chains" value="R=1-382, R=438-596"/>
</dbReference>
<dbReference type="PDB" id="6CND">
    <property type="method" value="EM"/>
    <property type="resolution" value="4.80 A"/>
    <property type="chains" value="R=1-382, R=438-596"/>
</dbReference>
<dbReference type="PDB" id="6CNF">
    <property type="method" value="EM"/>
    <property type="resolution" value="4.50 A"/>
    <property type="chains" value="R=1-382, R=438-596"/>
</dbReference>
<dbReference type="PDB" id="6EU0">
    <property type="method" value="EM"/>
    <property type="resolution" value="4.00 A"/>
    <property type="chains" value="Z=1-596"/>
</dbReference>
<dbReference type="PDB" id="6F40">
    <property type="method" value="EM"/>
    <property type="resolution" value="3.70 A"/>
    <property type="chains" value="V=1-596"/>
</dbReference>
<dbReference type="PDB" id="6F41">
    <property type="method" value="EM"/>
    <property type="resolution" value="4.30 A"/>
    <property type="chains" value="V=1-596"/>
</dbReference>
<dbReference type="PDB" id="6F42">
    <property type="method" value="EM"/>
    <property type="resolution" value="5.50 A"/>
    <property type="chains" value="V=1-596"/>
</dbReference>
<dbReference type="PDB" id="6F44">
    <property type="method" value="EM"/>
    <property type="resolution" value="4.20 A"/>
    <property type="chains" value="V=1-596"/>
</dbReference>
<dbReference type="PDB" id="7Q5B">
    <property type="method" value="EM"/>
    <property type="resolution" value="3.98 A"/>
    <property type="chains" value="Z=1-596"/>
</dbReference>
<dbReference type="PDB" id="8FFZ">
    <property type="method" value="EM"/>
    <property type="resolution" value="3.80 A"/>
    <property type="chains" value="H=1-382, H=439-596"/>
</dbReference>
<dbReference type="PDBsum" id="1NGM"/>
<dbReference type="PDBsum" id="6CNB"/>
<dbReference type="PDBsum" id="6CNC"/>
<dbReference type="PDBsum" id="6CND"/>
<dbReference type="PDBsum" id="6CNF"/>
<dbReference type="PDBsum" id="6EU0"/>
<dbReference type="PDBsum" id="6F40"/>
<dbReference type="PDBsum" id="6F41"/>
<dbReference type="PDBsum" id="6F42"/>
<dbReference type="PDBsum" id="6F44"/>
<dbReference type="PDBsum" id="7Q5B"/>
<dbReference type="PDBsum" id="8FFZ"/>
<dbReference type="EMDB" id="EMD-13831"/>
<dbReference type="EMDB" id="EMD-29071"/>
<dbReference type="EMDB" id="EMD-3955"/>
<dbReference type="EMDB" id="EMD-4180"/>
<dbReference type="EMDB" id="EMD-4181"/>
<dbReference type="EMDB" id="EMD-4182"/>
<dbReference type="EMDB" id="EMD-4183"/>
<dbReference type="EMDB" id="EMD-7530"/>
<dbReference type="EMDB" id="EMD-7531"/>
<dbReference type="EMDB" id="EMD-7532"/>
<dbReference type="EMDB" id="EMD-7533"/>
<dbReference type="SMR" id="P29056"/>
<dbReference type="BioGRID" id="33497">
    <property type="interactions" value="203"/>
</dbReference>
<dbReference type="ComplexPortal" id="CPX-1143">
    <property type="entry name" value="General transcription factor TFIIIB complex"/>
</dbReference>
<dbReference type="DIP" id="DIP-191N"/>
<dbReference type="FunCoup" id="P29056">
    <property type="interactions" value="570"/>
</dbReference>
<dbReference type="IntAct" id="P29056">
    <property type="interactions" value="31"/>
</dbReference>
<dbReference type="MINT" id="P29056"/>
<dbReference type="STRING" id="4932.YGR246C"/>
<dbReference type="iPTMnet" id="P29056"/>
<dbReference type="PaxDb" id="4932-YGR246C"/>
<dbReference type="PeptideAtlas" id="P29056"/>
<dbReference type="EnsemblFungi" id="YGR246C_mRNA">
    <property type="protein sequence ID" value="YGR246C"/>
    <property type="gene ID" value="YGR246C"/>
</dbReference>
<dbReference type="GeneID" id="853161"/>
<dbReference type="KEGG" id="sce:YGR246C"/>
<dbReference type="AGR" id="SGD:S000003478"/>
<dbReference type="SGD" id="S000003478">
    <property type="gene designation" value="BRF1"/>
</dbReference>
<dbReference type="VEuPathDB" id="FungiDB:YGR246C"/>
<dbReference type="eggNOG" id="KOG1598">
    <property type="taxonomic scope" value="Eukaryota"/>
</dbReference>
<dbReference type="GeneTree" id="ENSGT00390000010349"/>
<dbReference type="HOGENOM" id="CLU_010293_3_3_1"/>
<dbReference type="InParanoid" id="P29056"/>
<dbReference type="OMA" id="EPPCKVM"/>
<dbReference type="OrthoDB" id="511529at2759"/>
<dbReference type="BioCyc" id="YEAST:G3O-30921-MONOMER"/>
<dbReference type="Reactome" id="R-SCE-76066">
    <property type="pathway name" value="RNA Polymerase III Transcription Initiation From Type 2 Promoter"/>
</dbReference>
<dbReference type="BioGRID-ORCS" id="853161">
    <property type="hits" value="0 hits in 10 CRISPR screens"/>
</dbReference>
<dbReference type="EvolutionaryTrace" id="P29056"/>
<dbReference type="PRO" id="PR:P29056"/>
<dbReference type="Proteomes" id="UP000002311">
    <property type="component" value="Chromosome VII"/>
</dbReference>
<dbReference type="RNAct" id="P29056">
    <property type="molecule type" value="protein"/>
</dbReference>
<dbReference type="GO" id="GO:0005654">
    <property type="term" value="C:nucleoplasm"/>
    <property type="evidence" value="ECO:0000304"/>
    <property type="project" value="Reactome"/>
</dbReference>
<dbReference type="GO" id="GO:0005634">
    <property type="term" value="C:nucleus"/>
    <property type="evidence" value="ECO:0000318"/>
    <property type="project" value="GO_Central"/>
</dbReference>
<dbReference type="GO" id="GO:0000126">
    <property type="term" value="C:transcription factor TFIIIB complex"/>
    <property type="evidence" value="ECO:0000314"/>
    <property type="project" value="SGD"/>
</dbReference>
<dbReference type="GO" id="GO:0097550">
    <property type="term" value="C:transcription preinitiation complex"/>
    <property type="evidence" value="ECO:0000318"/>
    <property type="project" value="GO_Central"/>
</dbReference>
<dbReference type="GO" id="GO:0003677">
    <property type="term" value="F:DNA binding"/>
    <property type="evidence" value="ECO:0000314"/>
    <property type="project" value="SGD"/>
</dbReference>
<dbReference type="GO" id="GO:0000994">
    <property type="term" value="F:RNA polymerase III core binding"/>
    <property type="evidence" value="ECO:0000314"/>
    <property type="project" value="SGD"/>
</dbReference>
<dbReference type="GO" id="GO:0000995">
    <property type="term" value="F:RNA polymerase III general transcription initiation factor activity"/>
    <property type="evidence" value="ECO:0000318"/>
    <property type="project" value="GO_Central"/>
</dbReference>
<dbReference type="GO" id="GO:0001006">
    <property type="term" value="F:RNA polymerase III type 3 promoter sequence-specific DNA binding"/>
    <property type="evidence" value="ECO:0000318"/>
    <property type="project" value="GO_Central"/>
</dbReference>
<dbReference type="GO" id="GO:0017025">
    <property type="term" value="F:TBP-class protein binding"/>
    <property type="evidence" value="ECO:0000314"/>
    <property type="project" value="SGD"/>
</dbReference>
<dbReference type="GO" id="GO:0001156">
    <property type="term" value="F:TFIIIC-class transcription factor complex binding"/>
    <property type="evidence" value="ECO:0000314"/>
    <property type="project" value="SGD"/>
</dbReference>
<dbReference type="GO" id="GO:0008270">
    <property type="term" value="F:zinc ion binding"/>
    <property type="evidence" value="ECO:0007669"/>
    <property type="project" value="UniProtKB-KW"/>
</dbReference>
<dbReference type="GO" id="GO:0006352">
    <property type="term" value="P:DNA-templated transcription initiation"/>
    <property type="evidence" value="ECO:0000318"/>
    <property type="project" value="GO_Central"/>
</dbReference>
<dbReference type="GO" id="GO:0001112">
    <property type="term" value="P:DNA-templated transcription open complex formation"/>
    <property type="evidence" value="ECO:0000315"/>
    <property type="project" value="SGD"/>
</dbReference>
<dbReference type="GO" id="GO:0006359">
    <property type="term" value="P:regulation of transcription by RNA polymerase III"/>
    <property type="evidence" value="ECO:0000314"/>
    <property type="project" value="ComplexPortal"/>
</dbReference>
<dbReference type="GO" id="GO:0070898">
    <property type="term" value="P:RNA polymerase III preinitiation complex assembly"/>
    <property type="evidence" value="ECO:0000314"/>
    <property type="project" value="SGD"/>
</dbReference>
<dbReference type="GO" id="GO:0006383">
    <property type="term" value="P:transcription by RNA polymerase III"/>
    <property type="evidence" value="ECO:0000318"/>
    <property type="project" value="GO_Central"/>
</dbReference>
<dbReference type="CDD" id="cd20553">
    <property type="entry name" value="CYCLIN_TFIIIB90_rpt1"/>
    <property type="match status" value="1"/>
</dbReference>
<dbReference type="CDD" id="cd20554">
    <property type="entry name" value="CYCLIN_TFIIIB90_rpt2"/>
    <property type="match status" value="1"/>
</dbReference>
<dbReference type="FunFam" id="1.10.472.10:FF:000002">
    <property type="entry name" value="Transcription factor IIIB 90 kDa subunit"/>
    <property type="match status" value="1"/>
</dbReference>
<dbReference type="FunFam" id="1.10.472.10:FF:000007">
    <property type="entry name" value="Transcription factor IIIB 90 kDa subunit"/>
    <property type="match status" value="1"/>
</dbReference>
<dbReference type="FunFam" id="1.20.5.650:FF:000004">
    <property type="entry name" value="Transcription factor TFIIIB subunit"/>
    <property type="match status" value="1"/>
</dbReference>
<dbReference type="Gene3D" id="2.20.25.10">
    <property type="match status" value="1"/>
</dbReference>
<dbReference type="Gene3D" id="1.10.472.10">
    <property type="entry name" value="Cyclin-like"/>
    <property type="match status" value="2"/>
</dbReference>
<dbReference type="Gene3D" id="1.20.5.650">
    <property type="entry name" value="Single helix bin"/>
    <property type="match status" value="1"/>
</dbReference>
<dbReference type="InterPro" id="IPR011665">
    <property type="entry name" value="BRF1_TBP-bd_dom"/>
</dbReference>
<dbReference type="InterPro" id="IPR013763">
    <property type="entry name" value="Cyclin-like_dom"/>
</dbReference>
<dbReference type="InterPro" id="IPR036915">
    <property type="entry name" value="Cyclin-like_sf"/>
</dbReference>
<dbReference type="InterPro" id="IPR000812">
    <property type="entry name" value="TFIIB"/>
</dbReference>
<dbReference type="InterPro" id="IPR023486">
    <property type="entry name" value="TFIIB_CS"/>
</dbReference>
<dbReference type="InterPro" id="IPR013150">
    <property type="entry name" value="TFIIB_cyclin"/>
</dbReference>
<dbReference type="InterPro" id="IPR013137">
    <property type="entry name" value="Znf_TFIIB"/>
</dbReference>
<dbReference type="PANTHER" id="PTHR11618:SF4">
    <property type="entry name" value="TRANSCRIPTION FACTOR IIIB 90 KDA SUBUNIT"/>
    <property type="match status" value="1"/>
</dbReference>
<dbReference type="PANTHER" id="PTHR11618">
    <property type="entry name" value="TRANSCRIPTION INITIATION FACTOR IIB-RELATED"/>
    <property type="match status" value="1"/>
</dbReference>
<dbReference type="Pfam" id="PF07741">
    <property type="entry name" value="BRF1"/>
    <property type="match status" value="1"/>
</dbReference>
<dbReference type="Pfam" id="PF00382">
    <property type="entry name" value="TFIIB"/>
    <property type="match status" value="2"/>
</dbReference>
<dbReference type="Pfam" id="PF08271">
    <property type="entry name" value="Zn_Ribbon_TF"/>
    <property type="match status" value="1"/>
</dbReference>
<dbReference type="PRINTS" id="PR00685">
    <property type="entry name" value="TIFACTORIIB"/>
</dbReference>
<dbReference type="SMART" id="SM00385">
    <property type="entry name" value="CYCLIN"/>
    <property type="match status" value="2"/>
</dbReference>
<dbReference type="SUPFAM" id="SSF47954">
    <property type="entry name" value="Cyclin-like"/>
    <property type="match status" value="2"/>
</dbReference>
<dbReference type="SUPFAM" id="SSF57783">
    <property type="entry name" value="Zinc beta-ribbon"/>
    <property type="match status" value="1"/>
</dbReference>
<dbReference type="PROSITE" id="PS00782">
    <property type="entry name" value="TFIIB"/>
    <property type="match status" value="2"/>
</dbReference>
<dbReference type="PROSITE" id="PS51134">
    <property type="entry name" value="ZF_TFIIB"/>
    <property type="match status" value="1"/>
</dbReference>
<name>TF3B_YEAST</name>
<feature type="chain" id="PRO_0000119346" description="Transcription factor IIIB 70 kDa subunit">
    <location>
        <begin position="1"/>
        <end position="596"/>
    </location>
</feature>
<feature type="repeat" description="1">
    <location>
        <begin position="90"/>
        <end position="166"/>
    </location>
</feature>
<feature type="repeat" description="2">
    <location>
        <begin position="185"/>
        <end position="264"/>
    </location>
</feature>
<feature type="zinc finger region" description="TFIIB-type" evidence="1">
    <location>
        <begin position="1"/>
        <end position="33"/>
    </location>
</feature>
<feature type="region of interest" description="Disordered" evidence="2">
    <location>
        <begin position="363"/>
        <end position="421"/>
    </location>
</feature>
<feature type="region of interest" description="Disordered" evidence="2">
    <location>
        <begin position="509"/>
        <end position="534"/>
    </location>
</feature>
<feature type="compositionally biased region" description="Basic and acidic residues" evidence="2">
    <location>
        <begin position="365"/>
        <end position="375"/>
    </location>
</feature>
<feature type="compositionally biased region" description="Basic and acidic residues" evidence="2">
    <location>
        <begin position="388"/>
        <end position="421"/>
    </location>
</feature>
<feature type="compositionally biased region" description="Basic residues" evidence="2">
    <location>
        <begin position="516"/>
        <end position="526"/>
    </location>
</feature>
<feature type="binding site" evidence="1">
    <location>
        <position position="4"/>
    </location>
    <ligand>
        <name>Zn(2+)</name>
        <dbReference type="ChEBI" id="CHEBI:29105"/>
    </ligand>
</feature>
<feature type="binding site" evidence="1">
    <location>
        <position position="7"/>
    </location>
    <ligand>
        <name>Zn(2+)</name>
        <dbReference type="ChEBI" id="CHEBI:29105"/>
    </ligand>
</feature>
<feature type="binding site" evidence="1">
    <location>
        <position position="25"/>
    </location>
    <ligand>
        <name>Zn(2+)</name>
        <dbReference type="ChEBI" id="CHEBI:29105"/>
    </ligand>
</feature>
<feature type="binding site" evidence="1">
    <location>
        <position position="28"/>
    </location>
    <ligand>
        <name>Zn(2+)</name>
        <dbReference type="ChEBI" id="CHEBI:29105"/>
    </ligand>
</feature>
<feature type="modified residue" description="Phosphoserine" evidence="5 6">
    <location>
        <position position="381"/>
    </location>
</feature>
<feature type="modified residue" description="Phosphoserine" evidence="5">
    <location>
        <position position="384"/>
    </location>
</feature>
<feature type="helix" evidence="7">
    <location>
        <begin position="442"/>
        <end position="444"/>
    </location>
</feature>
<feature type="helix" evidence="7">
    <location>
        <begin position="448"/>
        <end position="452"/>
    </location>
</feature>
<feature type="helix" evidence="7">
    <location>
        <begin position="470"/>
        <end position="472"/>
    </location>
</feature>
<feature type="helix" evidence="7">
    <location>
        <begin position="477"/>
        <end position="490"/>
    </location>
</feature>
<feature type="turn" evidence="7">
    <location>
        <begin position="491"/>
        <end position="493"/>
    </location>
</feature>
<feature type="helix" evidence="7">
    <location>
        <begin position="494"/>
        <end position="500"/>
    </location>
</feature>
<feature type="turn" evidence="7">
    <location>
        <begin position="501"/>
        <end position="505"/>
    </location>
</feature>
<reference key="1">
    <citation type="journal article" date="1992" name="Cell">
        <title>PCF4 encodes an RNA polymerase III transcription factor with homology to TFIIB.</title>
        <authorList>
            <person name="Lopez-De-Leon A."/>
            <person name="Librizzi M."/>
            <person name="Puglia K."/>
            <person name="Willis I.M."/>
        </authorList>
    </citation>
    <scope>NUCLEOTIDE SEQUENCE [GENOMIC DNA]</scope>
</reference>
<reference key="2">
    <citation type="journal article" date="1992" name="Cell">
        <title>A suppressor of TBP mutations encodes an RNA polymerase III transcription factor with homology to TFIIB.</title>
        <authorList>
            <person name="Buratowski S."/>
            <person name="Zhou H."/>
        </authorList>
    </citation>
    <scope>NUCLEOTIDE SEQUENCE [GENOMIC DNA]</scope>
</reference>
<reference key="3">
    <citation type="journal article" date="1992" name="Genes Dev.">
        <title>A yeast TFIIB-related factor involved in RNA polymerase III transcription.</title>
        <authorList>
            <person name="Colbert T."/>
            <person name="Hahn S."/>
        </authorList>
    </citation>
    <scope>NUCLEOTIDE SEQUENCE [GENOMIC DNA]</scope>
</reference>
<reference key="4">
    <citation type="journal article" date="1997" name="Yeast">
        <title>Analysis of a 17.9 kb region from Saccharomyces cerevisiae chromosome VII reveals the presence of eight open reading frames, including BRF1 (TFIIIB70) and GCN5 genes.</title>
        <authorList>
            <person name="Feroli F."/>
            <person name="Carignani G."/>
            <person name="Pavanello A."/>
            <person name="Guerreiro P."/>
            <person name="Azevedo D."/>
            <person name="Rodrigues-Pousada C."/>
            <person name="Melchioretto P."/>
            <person name="Panzeri L."/>
            <person name="Agostoni Carbone M.L."/>
        </authorList>
    </citation>
    <scope>NUCLEOTIDE SEQUENCE [GENOMIC DNA]</scope>
    <source>
        <strain>ATCC 96604 / S288c / FY1679</strain>
    </source>
</reference>
<reference key="5">
    <citation type="journal article" date="1997" name="Nature">
        <title>The nucleotide sequence of Saccharomyces cerevisiae chromosome VII.</title>
        <authorList>
            <person name="Tettelin H."/>
            <person name="Agostoni-Carbone M.L."/>
            <person name="Albermann K."/>
            <person name="Albers M."/>
            <person name="Arroyo J."/>
            <person name="Backes U."/>
            <person name="Barreiros T."/>
            <person name="Bertani I."/>
            <person name="Bjourson A.J."/>
            <person name="Brueckner M."/>
            <person name="Bruschi C.V."/>
            <person name="Carignani G."/>
            <person name="Castagnoli L."/>
            <person name="Cerdan E."/>
            <person name="Clemente M.L."/>
            <person name="Coblenz A."/>
            <person name="Coglievina M."/>
            <person name="Coissac E."/>
            <person name="Defoor E."/>
            <person name="Del Bino S."/>
            <person name="Delius H."/>
            <person name="Delneri D."/>
            <person name="de Wergifosse P."/>
            <person name="Dujon B."/>
            <person name="Durand P."/>
            <person name="Entian K.-D."/>
            <person name="Eraso P."/>
            <person name="Escribano V."/>
            <person name="Fabiani L."/>
            <person name="Fartmann B."/>
            <person name="Feroli F."/>
            <person name="Feuermann M."/>
            <person name="Frontali L."/>
            <person name="Garcia-Gonzalez M."/>
            <person name="Garcia-Saez M.I."/>
            <person name="Goffeau A."/>
            <person name="Guerreiro P."/>
            <person name="Hani J."/>
            <person name="Hansen M."/>
            <person name="Hebling U."/>
            <person name="Hernandez K."/>
            <person name="Heumann K."/>
            <person name="Hilger F."/>
            <person name="Hofmann B."/>
            <person name="Indge K.J."/>
            <person name="James C.M."/>
            <person name="Klima R."/>
            <person name="Koetter P."/>
            <person name="Kramer B."/>
            <person name="Kramer W."/>
            <person name="Lauquin G."/>
            <person name="Leuther H."/>
            <person name="Louis E.J."/>
            <person name="Maillier E."/>
            <person name="Marconi A."/>
            <person name="Martegani E."/>
            <person name="Mazon M.J."/>
            <person name="Mazzoni C."/>
            <person name="McReynolds A.D.K."/>
            <person name="Melchioretto P."/>
            <person name="Mewes H.-W."/>
            <person name="Minenkova O."/>
            <person name="Mueller-Auer S."/>
            <person name="Nawrocki A."/>
            <person name="Netter P."/>
            <person name="Neu R."/>
            <person name="Nombela C."/>
            <person name="Oliver S.G."/>
            <person name="Panzeri L."/>
            <person name="Paoluzi S."/>
            <person name="Plevani P."/>
            <person name="Portetelle D."/>
            <person name="Portillo F."/>
            <person name="Potier S."/>
            <person name="Purnelle B."/>
            <person name="Rieger M."/>
            <person name="Riles L."/>
            <person name="Rinaldi T."/>
            <person name="Robben J."/>
            <person name="Rodrigues-Pousada C."/>
            <person name="Rodriguez-Belmonte E."/>
            <person name="Rodriguez-Torres A.M."/>
            <person name="Rose M."/>
            <person name="Ruzzi M."/>
            <person name="Saliola M."/>
            <person name="Sanchez-Perez M."/>
            <person name="Schaefer B."/>
            <person name="Schaefer M."/>
            <person name="Scharfe M."/>
            <person name="Schmidheini T."/>
            <person name="Schreer A."/>
            <person name="Skala J."/>
            <person name="Souciet J.-L."/>
            <person name="Steensma H.Y."/>
            <person name="Talla E."/>
            <person name="Thierry A."/>
            <person name="Vandenbol M."/>
            <person name="van der Aart Q.J.M."/>
            <person name="Van Dyck L."/>
            <person name="Vanoni M."/>
            <person name="Verhasselt P."/>
            <person name="Voet M."/>
            <person name="Volckaert G."/>
            <person name="Wambutt R."/>
            <person name="Watson M.D."/>
            <person name="Weber N."/>
            <person name="Wedler E."/>
            <person name="Wedler H."/>
            <person name="Wipfli P."/>
            <person name="Wolf K."/>
            <person name="Wright L.F."/>
            <person name="Zaccaria P."/>
            <person name="Zimmermann M."/>
            <person name="Zollner A."/>
            <person name="Kleine K."/>
        </authorList>
    </citation>
    <scope>NUCLEOTIDE SEQUENCE [LARGE SCALE GENOMIC DNA]</scope>
    <source>
        <strain>ATCC 204508 / S288c</strain>
    </source>
</reference>
<reference key="6">
    <citation type="journal article" date="2014" name="G3 (Bethesda)">
        <title>The reference genome sequence of Saccharomyces cerevisiae: Then and now.</title>
        <authorList>
            <person name="Engel S.R."/>
            <person name="Dietrich F.S."/>
            <person name="Fisk D.G."/>
            <person name="Binkley G."/>
            <person name="Balakrishnan R."/>
            <person name="Costanzo M.C."/>
            <person name="Dwight S.S."/>
            <person name="Hitz B.C."/>
            <person name="Karra K."/>
            <person name="Nash R.S."/>
            <person name="Weng S."/>
            <person name="Wong E.D."/>
            <person name="Lloyd P."/>
            <person name="Skrzypek M.S."/>
            <person name="Miyasato S.R."/>
            <person name="Simison M."/>
            <person name="Cherry J.M."/>
        </authorList>
    </citation>
    <scope>GENOME REANNOTATION</scope>
    <source>
        <strain>ATCC 204508 / S288c</strain>
    </source>
</reference>
<reference key="7">
    <citation type="journal article" date="2003" name="Nature">
        <title>Global analysis of protein expression in yeast.</title>
        <authorList>
            <person name="Ghaemmaghami S."/>
            <person name="Huh W.-K."/>
            <person name="Bower K."/>
            <person name="Howson R.W."/>
            <person name="Belle A."/>
            <person name="Dephoure N."/>
            <person name="O'Shea E.K."/>
            <person name="Weissman J.S."/>
        </authorList>
    </citation>
    <scope>LEVEL OF PROTEIN EXPRESSION [LARGE SCALE ANALYSIS]</scope>
</reference>
<reference key="8">
    <citation type="journal article" date="2007" name="Proc. Natl. Acad. Sci. U.S.A.">
        <title>Analysis of phosphorylation sites on proteins from Saccharomyces cerevisiae by electron transfer dissociation (ETD) mass spectrometry.</title>
        <authorList>
            <person name="Chi A."/>
            <person name="Huttenhower C."/>
            <person name="Geer L.Y."/>
            <person name="Coon J.J."/>
            <person name="Syka J.E.P."/>
            <person name="Bai D.L."/>
            <person name="Shabanowitz J."/>
            <person name="Burke D.J."/>
            <person name="Troyanskaya O.G."/>
            <person name="Hunt D.F."/>
        </authorList>
    </citation>
    <scope>PHOSPHORYLATION [LARGE SCALE ANALYSIS] AT SER-381 AND SER-384</scope>
    <scope>IDENTIFICATION BY MASS SPECTROMETRY [LARGE SCALE ANALYSIS]</scope>
</reference>
<reference key="9">
    <citation type="journal article" date="2009" name="Science">
        <title>Global analysis of Cdk1 substrate phosphorylation sites provides insights into evolution.</title>
        <authorList>
            <person name="Holt L.J."/>
            <person name="Tuch B.B."/>
            <person name="Villen J."/>
            <person name="Johnson A.D."/>
            <person name="Gygi S.P."/>
            <person name="Morgan D.O."/>
        </authorList>
    </citation>
    <scope>PHOSPHORYLATION [LARGE SCALE ANALYSIS] AT SER-381</scope>
    <scope>IDENTIFICATION BY MASS SPECTROMETRY [LARGE SCALE ANALYSIS]</scope>
</reference>
<gene>
    <name type="primary">BRF1</name>
    <name type="synonym">PCF4</name>
    <name type="synonym">TDS4</name>
    <name type="ordered locus">YGR246C</name>
</gene>